<proteinExistence type="inferred from homology"/>
<name>RL24_RHIJ3</name>
<accession>Q1MID0</accession>
<dbReference type="EMBL" id="AM236080">
    <property type="protein sequence ID" value="CAK07280.1"/>
    <property type="molecule type" value="Genomic_DNA"/>
</dbReference>
<dbReference type="RefSeq" id="WP_003547559.1">
    <property type="nucleotide sequence ID" value="NC_008380.1"/>
</dbReference>
<dbReference type="SMR" id="Q1MID0"/>
<dbReference type="EnsemblBacteria" id="CAK07280">
    <property type="protein sequence ID" value="CAK07280"/>
    <property type="gene ID" value="RL1785"/>
</dbReference>
<dbReference type="GeneID" id="84669498"/>
<dbReference type="KEGG" id="rle:RL1785"/>
<dbReference type="eggNOG" id="COG0198">
    <property type="taxonomic scope" value="Bacteria"/>
</dbReference>
<dbReference type="HOGENOM" id="CLU_093315_2_2_5"/>
<dbReference type="Proteomes" id="UP000006575">
    <property type="component" value="Chromosome"/>
</dbReference>
<dbReference type="GO" id="GO:1990904">
    <property type="term" value="C:ribonucleoprotein complex"/>
    <property type="evidence" value="ECO:0007669"/>
    <property type="project" value="UniProtKB-KW"/>
</dbReference>
<dbReference type="GO" id="GO:0005840">
    <property type="term" value="C:ribosome"/>
    <property type="evidence" value="ECO:0007669"/>
    <property type="project" value="UniProtKB-KW"/>
</dbReference>
<dbReference type="GO" id="GO:0019843">
    <property type="term" value="F:rRNA binding"/>
    <property type="evidence" value="ECO:0007669"/>
    <property type="project" value="UniProtKB-UniRule"/>
</dbReference>
<dbReference type="GO" id="GO:0003735">
    <property type="term" value="F:structural constituent of ribosome"/>
    <property type="evidence" value="ECO:0007669"/>
    <property type="project" value="InterPro"/>
</dbReference>
<dbReference type="GO" id="GO:0006412">
    <property type="term" value="P:translation"/>
    <property type="evidence" value="ECO:0007669"/>
    <property type="project" value="UniProtKB-UniRule"/>
</dbReference>
<dbReference type="CDD" id="cd06089">
    <property type="entry name" value="KOW_RPL26"/>
    <property type="match status" value="1"/>
</dbReference>
<dbReference type="FunFam" id="2.30.30.30:FF:000004">
    <property type="entry name" value="50S ribosomal protein L24"/>
    <property type="match status" value="1"/>
</dbReference>
<dbReference type="Gene3D" id="2.30.30.30">
    <property type="match status" value="1"/>
</dbReference>
<dbReference type="HAMAP" id="MF_01326_B">
    <property type="entry name" value="Ribosomal_uL24_B"/>
    <property type="match status" value="1"/>
</dbReference>
<dbReference type="InterPro" id="IPR005824">
    <property type="entry name" value="KOW"/>
</dbReference>
<dbReference type="InterPro" id="IPR014722">
    <property type="entry name" value="Rib_uL2_dom2"/>
</dbReference>
<dbReference type="InterPro" id="IPR003256">
    <property type="entry name" value="Ribosomal_uL24"/>
</dbReference>
<dbReference type="InterPro" id="IPR041988">
    <property type="entry name" value="Ribosomal_uL24_KOW"/>
</dbReference>
<dbReference type="InterPro" id="IPR008991">
    <property type="entry name" value="Translation_prot_SH3-like_sf"/>
</dbReference>
<dbReference type="NCBIfam" id="TIGR01079">
    <property type="entry name" value="rplX_bact"/>
    <property type="match status" value="1"/>
</dbReference>
<dbReference type="PANTHER" id="PTHR12903">
    <property type="entry name" value="MITOCHONDRIAL RIBOSOMAL PROTEIN L24"/>
    <property type="match status" value="1"/>
</dbReference>
<dbReference type="Pfam" id="PF00467">
    <property type="entry name" value="KOW"/>
    <property type="match status" value="1"/>
</dbReference>
<dbReference type="Pfam" id="PF17136">
    <property type="entry name" value="ribosomal_L24"/>
    <property type="match status" value="1"/>
</dbReference>
<dbReference type="SMART" id="SM00739">
    <property type="entry name" value="KOW"/>
    <property type="match status" value="1"/>
</dbReference>
<dbReference type="SUPFAM" id="SSF50104">
    <property type="entry name" value="Translation proteins SH3-like domain"/>
    <property type="match status" value="1"/>
</dbReference>
<reference key="1">
    <citation type="journal article" date="2006" name="Genome Biol.">
        <title>The genome of Rhizobium leguminosarum has recognizable core and accessory components.</title>
        <authorList>
            <person name="Young J.P.W."/>
            <person name="Crossman L.C."/>
            <person name="Johnston A.W.B."/>
            <person name="Thomson N.R."/>
            <person name="Ghazoui Z.F."/>
            <person name="Hull K.H."/>
            <person name="Wexler M."/>
            <person name="Curson A.R.J."/>
            <person name="Todd J.D."/>
            <person name="Poole P.S."/>
            <person name="Mauchline T.H."/>
            <person name="East A.K."/>
            <person name="Quail M.A."/>
            <person name="Churcher C."/>
            <person name="Arrowsmith C."/>
            <person name="Cherevach I."/>
            <person name="Chillingworth T."/>
            <person name="Clarke K."/>
            <person name="Cronin A."/>
            <person name="Davis P."/>
            <person name="Fraser A."/>
            <person name="Hance Z."/>
            <person name="Hauser H."/>
            <person name="Jagels K."/>
            <person name="Moule S."/>
            <person name="Mungall K."/>
            <person name="Norbertczak H."/>
            <person name="Rabbinowitsch E."/>
            <person name="Sanders M."/>
            <person name="Simmonds M."/>
            <person name="Whitehead S."/>
            <person name="Parkhill J."/>
        </authorList>
    </citation>
    <scope>NUCLEOTIDE SEQUENCE [LARGE SCALE GENOMIC DNA]</scope>
    <source>
        <strain>DSM 114642 / LMG 32736 / 3841</strain>
    </source>
</reference>
<comment type="function">
    <text evidence="1">One of two assembly initiator proteins, it binds directly to the 5'-end of the 23S rRNA, where it nucleates assembly of the 50S subunit.</text>
</comment>
<comment type="function">
    <text evidence="1">One of the proteins that surrounds the polypeptide exit tunnel on the outside of the subunit.</text>
</comment>
<comment type="subunit">
    <text evidence="1">Part of the 50S ribosomal subunit.</text>
</comment>
<comment type="similarity">
    <text evidence="1">Belongs to the universal ribosomal protein uL24 family.</text>
</comment>
<gene>
    <name evidence="1" type="primary">rplX</name>
    <name type="ordered locus">RL1785</name>
</gene>
<keyword id="KW-0687">Ribonucleoprotein</keyword>
<keyword id="KW-0689">Ribosomal protein</keyword>
<keyword id="KW-0694">RNA-binding</keyword>
<keyword id="KW-0699">rRNA-binding</keyword>
<evidence type="ECO:0000255" key="1">
    <source>
        <dbReference type="HAMAP-Rule" id="MF_01326"/>
    </source>
</evidence>
<evidence type="ECO:0000305" key="2"/>
<protein>
    <recommendedName>
        <fullName evidence="1">Large ribosomal subunit protein uL24</fullName>
    </recommendedName>
    <alternativeName>
        <fullName evidence="2">50S ribosomal protein L24</fullName>
    </alternativeName>
</protein>
<feature type="chain" id="PRO_1000052289" description="Large ribosomal subunit protein uL24">
    <location>
        <begin position="1"/>
        <end position="102"/>
    </location>
</feature>
<organism>
    <name type="scientific">Rhizobium johnstonii (strain DSM 114642 / LMG 32736 / 3841)</name>
    <name type="common">Rhizobium leguminosarum bv. viciae</name>
    <dbReference type="NCBI Taxonomy" id="216596"/>
    <lineage>
        <taxon>Bacteria</taxon>
        <taxon>Pseudomonadati</taxon>
        <taxon>Pseudomonadota</taxon>
        <taxon>Alphaproteobacteria</taxon>
        <taxon>Hyphomicrobiales</taxon>
        <taxon>Rhizobiaceae</taxon>
        <taxon>Rhizobium/Agrobacterium group</taxon>
        <taxon>Rhizobium</taxon>
        <taxon>Rhizobium johnstonii</taxon>
    </lineage>
</organism>
<sequence>MQKIRKGDKVVMLAGKDKGRTGEVVQVMPKEDRAVVRGVNVVKRHQRQTQTQEAGIINKEAPVHLSNVAIIDKDGKPTRVGFKVVDGKKVRVAKRSGEVIDG</sequence>